<feature type="chain" id="PRO_0000176198" description="Uracil-DNA glycosylase">
    <location>
        <begin position="1"/>
        <end position="252"/>
    </location>
</feature>
<feature type="active site" description="Proton acceptor" evidence="1">
    <location>
        <position position="87"/>
    </location>
</feature>
<reference key="1">
    <citation type="journal article" date="1992" name="J. Virol.">
        <title>Primary structure of the herpesvirus saimiri genome.</title>
        <authorList>
            <person name="Albrecht J.-C."/>
            <person name="Nicholas J."/>
            <person name="Biller D."/>
            <person name="Cameron K.R."/>
            <person name="Biesinger B."/>
            <person name="Newman C."/>
            <person name="Wittmann S."/>
            <person name="Craxton M.A."/>
            <person name="Coleman H."/>
            <person name="Fleckenstein B."/>
            <person name="Honess R.W."/>
        </authorList>
    </citation>
    <scope>NUCLEOTIDE SEQUENCE [LARGE SCALE GENOMIC DNA]</scope>
</reference>
<keyword id="KW-0227">DNA damage</keyword>
<keyword id="KW-0234">DNA repair</keyword>
<keyword id="KW-1048">Host nucleus</keyword>
<keyword id="KW-0378">Hydrolase</keyword>
<keyword id="KW-1185">Reference proteome</keyword>
<protein>
    <recommendedName>
        <fullName evidence="1">Uracil-DNA glycosylase</fullName>
        <shortName evidence="1">UDG</shortName>
        <ecNumber evidence="1">3.2.2.27</ecNumber>
    </recommendedName>
    <alternativeName>
        <fullName evidence="1">UNG</fullName>
    </alternativeName>
</protein>
<proteinExistence type="inferred from homology"/>
<dbReference type="EC" id="3.2.2.27" evidence="1"/>
<dbReference type="EMBL" id="X64346">
    <property type="protein sequence ID" value="CAA45669.1"/>
    <property type="molecule type" value="Genomic_DNA"/>
</dbReference>
<dbReference type="RefSeq" id="NP_040248.1">
    <property type="nucleotide sequence ID" value="NC_001350.1"/>
</dbReference>
<dbReference type="SMR" id="Q01019"/>
<dbReference type="KEGG" id="vg:1682489"/>
<dbReference type="Proteomes" id="UP000000587">
    <property type="component" value="Segment"/>
</dbReference>
<dbReference type="GO" id="GO:0042025">
    <property type="term" value="C:host cell nucleus"/>
    <property type="evidence" value="ECO:0007669"/>
    <property type="project" value="UniProtKB-SubCell"/>
</dbReference>
<dbReference type="GO" id="GO:0004844">
    <property type="term" value="F:uracil DNA N-glycosylase activity"/>
    <property type="evidence" value="ECO:0007669"/>
    <property type="project" value="UniProtKB-EC"/>
</dbReference>
<dbReference type="GO" id="GO:0097510">
    <property type="term" value="P:base-excision repair, AP site formation via deaminated base removal"/>
    <property type="evidence" value="ECO:0007669"/>
    <property type="project" value="TreeGrafter"/>
</dbReference>
<dbReference type="CDD" id="cd10027">
    <property type="entry name" value="UDG-F1-like"/>
    <property type="match status" value="1"/>
</dbReference>
<dbReference type="Gene3D" id="3.40.470.10">
    <property type="entry name" value="Uracil-DNA glycosylase-like domain"/>
    <property type="match status" value="1"/>
</dbReference>
<dbReference type="HAMAP" id="MF_00148">
    <property type="entry name" value="UDG"/>
    <property type="match status" value="1"/>
</dbReference>
<dbReference type="InterPro" id="IPR002043">
    <property type="entry name" value="UDG_fam1"/>
</dbReference>
<dbReference type="InterPro" id="IPR018085">
    <property type="entry name" value="Ura-DNA_Glyclase_AS"/>
</dbReference>
<dbReference type="InterPro" id="IPR005122">
    <property type="entry name" value="Uracil-DNA_glycosylase-like"/>
</dbReference>
<dbReference type="InterPro" id="IPR036895">
    <property type="entry name" value="Uracil-DNA_glycosylase-like_sf"/>
</dbReference>
<dbReference type="NCBIfam" id="NF003588">
    <property type="entry name" value="PRK05254.1-1"/>
    <property type="match status" value="1"/>
</dbReference>
<dbReference type="NCBIfam" id="NF003589">
    <property type="entry name" value="PRK05254.1-2"/>
    <property type="match status" value="1"/>
</dbReference>
<dbReference type="NCBIfam" id="NF003592">
    <property type="entry name" value="PRK05254.1-5"/>
    <property type="match status" value="1"/>
</dbReference>
<dbReference type="NCBIfam" id="TIGR00628">
    <property type="entry name" value="ung"/>
    <property type="match status" value="1"/>
</dbReference>
<dbReference type="PANTHER" id="PTHR11264">
    <property type="entry name" value="URACIL-DNA GLYCOSYLASE"/>
    <property type="match status" value="1"/>
</dbReference>
<dbReference type="PANTHER" id="PTHR11264:SF0">
    <property type="entry name" value="URACIL-DNA GLYCOSYLASE"/>
    <property type="match status" value="1"/>
</dbReference>
<dbReference type="Pfam" id="PF03167">
    <property type="entry name" value="UDG"/>
    <property type="match status" value="1"/>
</dbReference>
<dbReference type="SMART" id="SM00986">
    <property type="entry name" value="UDG"/>
    <property type="match status" value="1"/>
</dbReference>
<dbReference type="SMART" id="SM00987">
    <property type="entry name" value="UreE_C"/>
    <property type="match status" value="1"/>
</dbReference>
<dbReference type="SUPFAM" id="SSF52141">
    <property type="entry name" value="Uracil-DNA glycosylase-like"/>
    <property type="match status" value="1"/>
</dbReference>
<dbReference type="PROSITE" id="PS00130">
    <property type="entry name" value="U_DNA_GLYCOSYLASE"/>
    <property type="match status" value="1"/>
</dbReference>
<sequence length="252" mass="28864">MDNWLKQEIWSKTQHQDITSDDCLLLSTDWVEFLQMSQFLKQKLLQLLNCIKEKRKKAVIYPPDNKIMFWSYCCAPRDIKVVILGQDPYHGGQGTGLAFSVSYEHSIPPSLKNIFFELQRSDPLFHAPNHGCLNSWATQGVLLLNTVLTVEKGKAYSHSDLGWQWFTNYIISSVSEKLSNCVFMLWGTKAIEKSILIDSSKHLVLKAQHPSPLAAASQRVGTWPKFIGCDHFNQANKYLEEHKKKPISWALL</sequence>
<organismHost>
    <name type="scientific">Saimiri sciureus</name>
    <name type="common">Common squirrel monkey</name>
    <dbReference type="NCBI Taxonomy" id="9521"/>
</organismHost>
<gene>
    <name type="primary">46</name>
</gene>
<comment type="function">
    <text evidence="1">Excises uracil residues from the DNA which can arise as a result of misincorporation of dUMP residues by DNA polymerase or deamination of cytosines. Therefore may reduce deleterious uracil incorporation into the viral genome, particularly in terminally differentiated cells which lack DNA repair enzymes.</text>
</comment>
<comment type="catalytic activity">
    <reaction evidence="1">
        <text>Hydrolyzes single-stranded DNA or mismatched double-stranded DNA and polynucleotides, releasing free uracil.</text>
        <dbReference type="EC" id="3.2.2.27"/>
    </reaction>
</comment>
<comment type="subcellular location">
    <subcellularLocation>
        <location evidence="1">Host nucleus</location>
    </subcellularLocation>
</comment>
<comment type="similarity">
    <text evidence="1">Belongs to the uracil-DNA glycosylase (UDG) superfamily. UNG family.</text>
</comment>
<name>UNG_SHV21</name>
<evidence type="ECO:0000255" key="1">
    <source>
        <dbReference type="HAMAP-Rule" id="MF_04046"/>
    </source>
</evidence>
<organism>
    <name type="scientific">Saimiriine herpesvirus 2 (strain 11)</name>
    <name type="common">SaHV-2</name>
    <name type="synonym">Herpesvirus saimiri</name>
    <dbReference type="NCBI Taxonomy" id="10383"/>
    <lineage>
        <taxon>Viruses</taxon>
        <taxon>Duplodnaviria</taxon>
        <taxon>Heunggongvirae</taxon>
        <taxon>Peploviricota</taxon>
        <taxon>Herviviricetes</taxon>
        <taxon>Herpesvirales</taxon>
        <taxon>Orthoherpesviridae</taxon>
        <taxon>Gammaherpesvirinae</taxon>
        <taxon>Rhadinovirus</taxon>
        <taxon>Rhadinovirus saimiriinegamma2</taxon>
        <taxon>Saimiriine herpesvirus 2</taxon>
    </lineage>
</organism>
<accession>Q01019</accession>